<organism>
    <name type="scientific">Jannaschia sp. (strain CCS1)</name>
    <dbReference type="NCBI Taxonomy" id="290400"/>
    <lineage>
        <taxon>Bacteria</taxon>
        <taxon>Pseudomonadati</taxon>
        <taxon>Pseudomonadota</taxon>
        <taxon>Alphaproteobacteria</taxon>
        <taxon>Rhodobacterales</taxon>
        <taxon>Roseobacteraceae</taxon>
        <taxon>Jannaschia</taxon>
    </lineage>
</organism>
<accession>Q28QV8</accession>
<keyword id="KW-0030">Aminoacyl-tRNA synthetase</keyword>
<keyword id="KW-0067">ATP-binding</keyword>
<keyword id="KW-0963">Cytoplasm</keyword>
<keyword id="KW-0436">Ligase</keyword>
<keyword id="KW-0479">Metal-binding</keyword>
<keyword id="KW-0547">Nucleotide-binding</keyword>
<keyword id="KW-0648">Protein biosynthesis</keyword>
<keyword id="KW-1185">Reference proteome</keyword>
<keyword id="KW-0694">RNA-binding</keyword>
<keyword id="KW-0820">tRNA-binding</keyword>
<keyword id="KW-0862">Zinc</keyword>
<reference key="1">
    <citation type="submission" date="2006-02" db="EMBL/GenBank/DDBJ databases">
        <title>Complete sequence of chromosome of Jannaschia sp. CCS1.</title>
        <authorList>
            <consortium name="US DOE Joint Genome Institute"/>
            <person name="Copeland A."/>
            <person name="Lucas S."/>
            <person name="Lapidus A."/>
            <person name="Barry K."/>
            <person name="Detter J.C."/>
            <person name="Glavina del Rio T."/>
            <person name="Hammon N."/>
            <person name="Israni S."/>
            <person name="Pitluck S."/>
            <person name="Brettin T."/>
            <person name="Bruce D."/>
            <person name="Han C."/>
            <person name="Tapia R."/>
            <person name="Gilna P."/>
            <person name="Chertkov O."/>
            <person name="Saunders E."/>
            <person name="Schmutz J."/>
            <person name="Larimer F."/>
            <person name="Land M."/>
            <person name="Kyrpides N."/>
            <person name="Lykidis A."/>
            <person name="Moran M.A."/>
            <person name="Belas R."/>
            <person name="Ye W."/>
            <person name="Buchan A."/>
            <person name="Gonzalez J.M."/>
            <person name="Schell M.A."/>
            <person name="Richardson P."/>
        </authorList>
    </citation>
    <scope>NUCLEOTIDE SEQUENCE [LARGE SCALE GENOMIC DNA]</scope>
    <source>
        <strain>CCS1</strain>
    </source>
</reference>
<proteinExistence type="inferred from homology"/>
<name>SYA_JANSC</name>
<dbReference type="EC" id="6.1.1.7" evidence="1"/>
<dbReference type="EMBL" id="CP000264">
    <property type="protein sequence ID" value="ABD54904.1"/>
    <property type="molecule type" value="Genomic_DNA"/>
</dbReference>
<dbReference type="RefSeq" id="WP_011455109.1">
    <property type="nucleotide sequence ID" value="NC_007802.1"/>
</dbReference>
<dbReference type="SMR" id="Q28QV8"/>
<dbReference type="STRING" id="290400.Jann_1987"/>
<dbReference type="KEGG" id="jan:Jann_1987"/>
<dbReference type="eggNOG" id="COG0013">
    <property type="taxonomic scope" value="Bacteria"/>
</dbReference>
<dbReference type="HOGENOM" id="CLU_004485_1_1_5"/>
<dbReference type="OrthoDB" id="9803884at2"/>
<dbReference type="Proteomes" id="UP000008326">
    <property type="component" value="Chromosome"/>
</dbReference>
<dbReference type="GO" id="GO:0005829">
    <property type="term" value="C:cytosol"/>
    <property type="evidence" value="ECO:0007669"/>
    <property type="project" value="TreeGrafter"/>
</dbReference>
<dbReference type="GO" id="GO:0004813">
    <property type="term" value="F:alanine-tRNA ligase activity"/>
    <property type="evidence" value="ECO:0007669"/>
    <property type="project" value="UniProtKB-UniRule"/>
</dbReference>
<dbReference type="GO" id="GO:0002161">
    <property type="term" value="F:aminoacyl-tRNA deacylase activity"/>
    <property type="evidence" value="ECO:0007669"/>
    <property type="project" value="TreeGrafter"/>
</dbReference>
<dbReference type="GO" id="GO:0005524">
    <property type="term" value="F:ATP binding"/>
    <property type="evidence" value="ECO:0007669"/>
    <property type="project" value="UniProtKB-UniRule"/>
</dbReference>
<dbReference type="GO" id="GO:0000049">
    <property type="term" value="F:tRNA binding"/>
    <property type="evidence" value="ECO:0007669"/>
    <property type="project" value="UniProtKB-KW"/>
</dbReference>
<dbReference type="GO" id="GO:0008270">
    <property type="term" value="F:zinc ion binding"/>
    <property type="evidence" value="ECO:0007669"/>
    <property type="project" value="UniProtKB-UniRule"/>
</dbReference>
<dbReference type="GO" id="GO:0006419">
    <property type="term" value="P:alanyl-tRNA aminoacylation"/>
    <property type="evidence" value="ECO:0007669"/>
    <property type="project" value="UniProtKB-UniRule"/>
</dbReference>
<dbReference type="GO" id="GO:0045892">
    <property type="term" value="P:negative regulation of DNA-templated transcription"/>
    <property type="evidence" value="ECO:0007669"/>
    <property type="project" value="TreeGrafter"/>
</dbReference>
<dbReference type="CDD" id="cd00673">
    <property type="entry name" value="AlaRS_core"/>
    <property type="match status" value="1"/>
</dbReference>
<dbReference type="FunFam" id="2.40.30.130:FF:000001">
    <property type="entry name" value="Alanine--tRNA ligase"/>
    <property type="match status" value="1"/>
</dbReference>
<dbReference type="FunFam" id="3.10.310.40:FF:000001">
    <property type="entry name" value="Alanine--tRNA ligase"/>
    <property type="match status" value="1"/>
</dbReference>
<dbReference type="FunFam" id="3.30.54.20:FF:000001">
    <property type="entry name" value="Alanine--tRNA ligase"/>
    <property type="match status" value="1"/>
</dbReference>
<dbReference type="FunFam" id="3.30.930.10:FF:000004">
    <property type="entry name" value="Alanine--tRNA ligase"/>
    <property type="match status" value="1"/>
</dbReference>
<dbReference type="FunFam" id="3.30.980.10:FF:000004">
    <property type="entry name" value="Alanine--tRNA ligase, cytoplasmic"/>
    <property type="match status" value="1"/>
</dbReference>
<dbReference type="Gene3D" id="2.40.30.130">
    <property type="match status" value="1"/>
</dbReference>
<dbReference type="Gene3D" id="3.10.310.40">
    <property type="match status" value="1"/>
</dbReference>
<dbReference type="Gene3D" id="3.30.54.20">
    <property type="match status" value="1"/>
</dbReference>
<dbReference type="Gene3D" id="6.10.250.550">
    <property type="match status" value="1"/>
</dbReference>
<dbReference type="Gene3D" id="3.30.930.10">
    <property type="entry name" value="Bira Bifunctional Protein, Domain 2"/>
    <property type="match status" value="1"/>
</dbReference>
<dbReference type="Gene3D" id="3.30.980.10">
    <property type="entry name" value="Threonyl-trna Synthetase, Chain A, domain 2"/>
    <property type="match status" value="1"/>
</dbReference>
<dbReference type="HAMAP" id="MF_00036_B">
    <property type="entry name" value="Ala_tRNA_synth_B"/>
    <property type="match status" value="1"/>
</dbReference>
<dbReference type="InterPro" id="IPR045864">
    <property type="entry name" value="aa-tRNA-synth_II/BPL/LPL"/>
</dbReference>
<dbReference type="InterPro" id="IPR002318">
    <property type="entry name" value="Ala-tRNA-lgiase_IIc"/>
</dbReference>
<dbReference type="InterPro" id="IPR018162">
    <property type="entry name" value="Ala-tRNA-ligase_IIc_anticod-bd"/>
</dbReference>
<dbReference type="InterPro" id="IPR018165">
    <property type="entry name" value="Ala-tRNA-synth_IIc_core"/>
</dbReference>
<dbReference type="InterPro" id="IPR018164">
    <property type="entry name" value="Ala-tRNA-synth_IIc_N"/>
</dbReference>
<dbReference type="InterPro" id="IPR050058">
    <property type="entry name" value="Ala-tRNA_ligase"/>
</dbReference>
<dbReference type="InterPro" id="IPR023033">
    <property type="entry name" value="Ala_tRNA_ligase_euk/bac"/>
</dbReference>
<dbReference type="InterPro" id="IPR003156">
    <property type="entry name" value="DHHA1_dom"/>
</dbReference>
<dbReference type="InterPro" id="IPR018163">
    <property type="entry name" value="Thr/Ala-tRNA-synth_IIc_edit"/>
</dbReference>
<dbReference type="InterPro" id="IPR009000">
    <property type="entry name" value="Transl_B-barrel_sf"/>
</dbReference>
<dbReference type="InterPro" id="IPR012947">
    <property type="entry name" value="tRNA_SAD"/>
</dbReference>
<dbReference type="NCBIfam" id="TIGR00344">
    <property type="entry name" value="alaS"/>
    <property type="match status" value="1"/>
</dbReference>
<dbReference type="PANTHER" id="PTHR11777:SF9">
    <property type="entry name" value="ALANINE--TRNA LIGASE, CYTOPLASMIC"/>
    <property type="match status" value="1"/>
</dbReference>
<dbReference type="PANTHER" id="PTHR11777">
    <property type="entry name" value="ALANYL-TRNA SYNTHETASE"/>
    <property type="match status" value="1"/>
</dbReference>
<dbReference type="Pfam" id="PF02272">
    <property type="entry name" value="DHHA1"/>
    <property type="match status" value="1"/>
</dbReference>
<dbReference type="Pfam" id="PF01411">
    <property type="entry name" value="tRNA-synt_2c"/>
    <property type="match status" value="1"/>
</dbReference>
<dbReference type="Pfam" id="PF07973">
    <property type="entry name" value="tRNA_SAD"/>
    <property type="match status" value="1"/>
</dbReference>
<dbReference type="PRINTS" id="PR00980">
    <property type="entry name" value="TRNASYNTHALA"/>
</dbReference>
<dbReference type="SMART" id="SM00863">
    <property type="entry name" value="tRNA_SAD"/>
    <property type="match status" value="1"/>
</dbReference>
<dbReference type="SUPFAM" id="SSF55681">
    <property type="entry name" value="Class II aaRS and biotin synthetases"/>
    <property type="match status" value="1"/>
</dbReference>
<dbReference type="SUPFAM" id="SSF101353">
    <property type="entry name" value="Putative anticodon-binding domain of alanyl-tRNA synthetase (AlaRS)"/>
    <property type="match status" value="1"/>
</dbReference>
<dbReference type="SUPFAM" id="SSF55186">
    <property type="entry name" value="ThrRS/AlaRS common domain"/>
    <property type="match status" value="1"/>
</dbReference>
<dbReference type="SUPFAM" id="SSF50447">
    <property type="entry name" value="Translation proteins"/>
    <property type="match status" value="1"/>
</dbReference>
<dbReference type="PROSITE" id="PS50860">
    <property type="entry name" value="AA_TRNA_LIGASE_II_ALA"/>
    <property type="match status" value="1"/>
</dbReference>
<feature type="chain" id="PRO_0000347638" description="Alanine--tRNA ligase">
    <location>
        <begin position="1"/>
        <end position="884"/>
    </location>
</feature>
<feature type="binding site" evidence="1">
    <location>
        <position position="562"/>
    </location>
    <ligand>
        <name>Zn(2+)</name>
        <dbReference type="ChEBI" id="CHEBI:29105"/>
    </ligand>
</feature>
<feature type="binding site" evidence="1">
    <location>
        <position position="566"/>
    </location>
    <ligand>
        <name>Zn(2+)</name>
        <dbReference type="ChEBI" id="CHEBI:29105"/>
    </ligand>
</feature>
<feature type="binding site" evidence="1">
    <location>
        <position position="676"/>
    </location>
    <ligand>
        <name>Zn(2+)</name>
        <dbReference type="ChEBI" id="CHEBI:29105"/>
    </ligand>
</feature>
<feature type="binding site" evidence="1">
    <location>
        <position position="680"/>
    </location>
    <ligand>
        <name>Zn(2+)</name>
        <dbReference type="ChEBI" id="CHEBI:29105"/>
    </ligand>
</feature>
<gene>
    <name evidence="1" type="primary">alaS</name>
    <name type="ordered locus">Jann_1987</name>
</gene>
<evidence type="ECO:0000255" key="1">
    <source>
        <dbReference type="HAMAP-Rule" id="MF_00036"/>
    </source>
</evidence>
<sequence length="884" mass="95809">MTSLNDIRSTFLDYFGRQGHAVVPSSPLVPRNDPTLMFVNSGMVQFKNLFTGVEKRDYVRATSSQKCVRAGGKHNDLDNVGYTARHHTFFEMLGNFSFGDYFKEDAIRYAWELITKDFGLDKARLYVTVYHTDDEAFEIWKKVGVPEDRIIRIATSDNFWQMGPTGPCGPCTEIFYDHGEHIWGGPPGSAEEDGDRFIEIWNIVFMQNEQFADGTMVPLDMQSIDTGMGLERIGALLQGSHDNYDTDTMRALMEASAHASSTDLDGDQNVHHRVIADHLRSTSFLIADGVMPSNDGRGYVLRRIMRRAMRHAHLLGAKDPLMYRLVPALVSQMGQAYSELGQAQALITETLKLEEERFRQTLDRGLKLLDDEVAKLPEDGNLPGAAAFKLYDTYGFPLDLTQDALREQGRTVDTDGFDAAMAEQKAKARAAWSGSGDAADATIWFDIAEKNGVTEFLGYDTEVAEGQVLALVVDGARVDKVASNQDVIFVTNQTPFYAESGGQVGDSGTIRTETGVLHVTETRKVAGVFLHVGQVTEGTIKVGQGASLSVDHERRRYICANHSATHLLNEALRWAIGDSVVQRGSLNSRDRLRFDFSHNKPMTADELAQVEAEVNDLITRNTAVETRVMTPDDARALGAQALFGEKYGDEVRVVSMGHHAGSGKGLDKDTYSIELCGGTHVKRTGDIGPFVILSESASAAGVRRIEALTNQTASFYLSEQNERMGQLAAELNTQAADVLDRVKALKDDRKKLENEVAQLRRELAMAGGTSAPEAASVNGVNFHAQALSGVTGKDLAGIVDEHKARLGSGAVLLIADAGGKAAVAAGVTEDLTDRLSAVDLVRAAVAELGGKGGGGRPDFAQGGGKDAANAEAAIAAAKTVIEGV</sequence>
<protein>
    <recommendedName>
        <fullName evidence="1">Alanine--tRNA ligase</fullName>
        <ecNumber evidence="1">6.1.1.7</ecNumber>
    </recommendedName>
    <alternativeName>
        <fullName evidence="1">Alanyl-tRNA synthetase</fullName>
        <shortName evidence="1">AlaRS</shortName>
    </alternativeName>
</protein>
<comment type="function">
    <text evidence="1">Catalyzes the attachment of alanine to tRNA(Ala) in a two-step reaction: alanine is first activated by ATP to form Ala-AMP and then transferred to the acceptor end of tRNA(Ala). Also edits incorrectly charged Ser-tRNA(Ala) and Gly-tRNA(Ala) via its editing domain.</text>
</comment>
<comment type="catalytic activity">
    <reaction evidence="1">
        <text>tRNA(Ala) + L-alanine + ATP = L-alanyl-tRNA(Ala) + AMP + diphosphate</text>
        <dbReference type="Rhea" id="RHEA:12540"/>
        <dbReference type="Rhea" id="RHEA-COMP:9657"/>
        <dbReference type="Rhea" id="RHEA-COMP:9923"/>
        <dbReference type="ChEBI" id="CHEBI:30616"/>
        <dbReference type="ChEBI" id="CHEBI:33019"/>
        <dbReference type="ChEBI" id="CHEBI:57972"/>
        <dbReference type="ChEBI" id="CHEBI:78442"/>
        <dbReference type="ChEBI" id="CHEBI:78497"/>
        <dbReference type="ChEBI" id="CHEBI:456215"/>
        <dbReference type="EC" id="6.1.1.7"/>
    </reaction>
</comment>
<comment type="cofactor">
    <cofactor evidence="1">
        <name>Zn(2+)</name>
        <dbReference type="ChEBI" id="CHEBI:29105"/>
    </cofactor>
    <text evidence="1">Binds 1 zinc ion per subunit.</text>
</comment>
<comment type="subcellular location">
    <subcellularLocation>
        <location evidence="1">Cytoplasm</location>
    </subcellularLocation>
</comment>
<comment type="domain">
    <text evidence="1">Consists of three domains; the N-terminal catalytic domain, the editing domain and the C-terminal C-Ala domain. The editing domain removes incorrectly charged amino acids, while the C-Ala domain, along with tRNA(Ala), serves as a bridge to cooperatively bring together the editing and aminoacylation centers thus stimulating deacylation of misacylated tRNAs.</text>
</comment>
<comment type="similarity">
    <text evidence="1">Belongs to the class-II aminoacyl-tRNA synthetase family.</text>
</comment>